<feature type="chain" id="PRO_0000305959" description="Mediator of RNA polymerase II transcription subunit 21">
    <location>
        <begin position="1"/>
        <end position="208"/>
    </location>
</feature>
<feature type="region of interest" description="Disordered" evidence="3">
    <location>
        <begin position="52"/>
        <end position="122"/>
    </location>
</feature>
<feature type="coiled-coil region" evidence="2">
    <location>
        <begin position="146"/>
        <end position="195"/>
    </location>
</feature>
<feature type="compositionally biased region" description="Low complexity" evidence="3">
    <location>
        <begin position="63"/>
        <end position="83"/>
    </location>
</feature>
<feature type="compositionally biased region" description="Gly residues" evidence="3">
    <location>
        <begin position="84"/>
        <end position="104"/>
    </location>
</feature>
<name>MED21_ASPOR</name>
<dbReference type="EMBL" id="BA000051">
    <property type="protein sequence ID" value="BAE59772.1"/>
    <property type="molecule type" value="Genomic_DNA"/>
</dbReference>
<dbReference type="RefSeq" id="XP_001821774.1">
    <property type="nucleotide sequence ID" value="XM_001821722.1"/>
</dbReference>
<dbReference type="SMR" id="Q2UF93"/>
<dbReference type="STRING" id="510516.Q2UF93"/>
<dbReference type="EnsemblFungi" id="BAE59772">
    <property type="protein sequence ID" value="BAE59772"/>
    <property type="gene ID" value="AO090026000297"/>
</dbReference>
<dbReference type="GeneID" id="5993802"/>
<dbReference type="KEGG" id="aor:AO090026000297"/>
<dbReference type="VEuPathDB" id="FungiDB:AO090026000297"/>
<dbReference type="HOGENOM" id="CLU_094271_0_1_1"/>
<dbReference type="OMA" id="LTTYHDH"/>
<dbReference type="OrthoDB" id="131126at5052"/>
<dbReference type="Proteomes" id="UP000006564">
    <property type="component" value="Chromosome 3"/>
</dbReference>
<dbReference type="GO" id="GO:0016592">
    <property type="term" value="C:mediator complex"/>
    <property type="evidence" value="ECO:0007669"/>
    <property type="project" value="InterPro"/>
</dbReference>
<dbReference type="GO" id="GO:0003712">
    <property type="term" value="F:transcription coregulator activity"/>
    <property type="evidence" value="ECO:0007669"/>
    <property type="project" value="TreeGrafter"/>
</dbReference>
<dbReference type="GO" id="GO:0006357">
    <property type="term" value="P:regulation of transcription by RNA polymerase II"/>
    <property type="evidence" value="ECO:0007669"/>
    <property type="project" value="TreeGrafter"/>
</dbReference>
<dbReference type="Gene3D" id="6.10.280.10">
    <property type="entry name" value="Mediator complex, subunit Med21"/>
    <property type="match status" value="1"/>
</dbReference>
<dbReference type="InterPro" id="IPR037212">
    <property type="entry name" value="Med7/Med21-like"/>
</dbReference>
<dbReference type="InterPro" id="IPR021384">
    <property type="entry name" value="Mediator_Med21"/>
</dbReference>
<dbReference type="PANTHER" id="PTHR13381:SF0">
    <property type="entry name" value="MEDIATOR OF RNA POLYMERASE II TRANSCRIPTION SUBUNIT 21"/>
    <property type="match status" value="1"/>
</dbReference>
<dbReference type="PANTHER" id="PTHR13381">
    <property type="entry name" value="RNA POLYMERASE II HOLOENZYME COMPONENT SRB7"/>
    <property type="match status" value="1"/>
</dbReference>
<dbReference type="Pfam" id="PF11221">
    <property type="entry name" value="Med21"/>
    <property type="match status" value="1"/>
</dbReference>
<dbReference type="SUPFAM" id="SSF140718">
    <property type="entry name" value="Mediator hinge subcomplex-like"/>
    <property type="match status" value="1"/>
</dbReference>
<protein>
    <recommendedName>
        <fullName>Mediator of RNA polymerase II transcription subunit 21</fullName>
    </recommendedName>
    <alternativeName>
        <fullName>Mediator complex subunit 21</fullName>
    </alternativeName>
</protein>
<gene>
    <name type="primary">srb7</name>
    <name type="synonym">med21</name>
    <name type="ORF">AO090026000297</name>
</gene>
<organism>
    <name type="scientific">Aspergillus oryzae (strain ATCC 42149 / RIB 40)</name>
    <name type="common">Yellow koji mold</name>
    <dbReference type="NCBI Taxonomy" id="510516"/>
    <lineage>
        <taxon>Eukaryota</taxon>
        <taxon>Fungi</taxon>
        <taxon>Dikarya</taxon>
        <taxon>Ascomycota</taxon>
        <taxon>Pezizomycotina</taxon>
        <taxon>Eurotiomycetes</taxon>
        <taxon>Eurotiomycetidae</taxon>
        <taxon>Eurotiales</taxon>
        <taxon>Aspergillaceae</taxon>
        <taxon>Aspergillus</taxon>
        <taxon>Aspergillus subgen. Circumdati</taxon>
    </lineage>
</organism>
<accession>Q2UF93</accession>
<evidence type="ECO:0000250" key="1"/>
<evidence type="ECO:0000255" key="2"/>
<evidence type="ECO:0000256" key="3">
    <source>
        <dbReference type="SAM" id="MobiDB-lite"/>
    </source>
</evidence>
<evidence type="ECO:0000305" key="4"/>
<sequence length="208" mass="22131">MADILTQLQTCLDQLATQFYATIGYLVTYHDNSPAIPPQNDPTAAPALAKITKNSTAPPAPAGAPAGSQASPQQQSAQIPGQQQQGGGDAGQTPGAGGGTGGAGADPNLPPAPDSPRTFASRQRELARDLVIKEQQIEYLISVLPGIDSSEAEQERRIKELEKELRSAEEDREQRVRELRKLRKKLENVLGAVEVGIYGDRGAVASRR</sequence>
<comment type="function">
    <text evidence="1">Component of the Mediator complex, a coactivator involved in the regulated transcription of nearly all RNA polymerase II-dependent genes. Mediator functions as a bridge to convey information from gene-specific regulatory proteins to the basal RNA polymerase II transcription machinery. Mediator is recruited to promoters by direct interactions with regulatory proteins and serves as a scaffold for the assembly of a functional preinitiation complex with RNA polymerase II and the general transcription factors (By similarity).</text>
</comment>
<comment type="subunit">
    <text evidence="1">Component of the Mediator complex.</text>
</comment>
<comment type="subcellular location">
    <subcellularLocation>
        <location evidence="1">Nucleus</location>
    </subcellularLocation>
</comment>
<comment type="similarity">
    <text evidence="4">Belongs to the Mediator complex subunit 21 family.</text>
</comment>
<proteinExistence type="inferred from homology"/>
<keyword id="KW-0010">Activator</keyword>
<keyword id="KW-0175">Coiled coil</keyword>
<keyword id="KW-0539">Nucleus</keyword>
<keyword id="KW-1185">Reference proteome</keyword>
<keyword id="KW-0804">Transcription</keyword>
<keyword id="KW-0805">Transcription regulation</keyword>
<reference key="1">
    <citation type="journal article" date="2005" name="Nature">
        <title>Genome sequencing and analysis of Aspergillus oryzae.</title>
        <authorList>
            <person name="Machida M."/>
            <person name="Asai K."/>
            <person name="Sano M."/>
            <person name="Tanaka T."/>
            <person name="Kumagai T."/>
            <person name="Terai G."/>
            <person name="Kusumoto K."/>
            <person name="Arima T."/>
            <person name="Akita O."/>
            <person name="Kashiwagi Y."/>
            <person name="Abe K."/>
            <person name="Gomi K."/>
            <person name="Horiuchi H."/>
            <person name="Kitamoto K."/>
            <person name="Kobayashi T."/>
            <person name="Takeuchi M."/>
            <person name="Denning D.W."/>
            <person name="Galagan J.E."/>
            <person name="Nierman W.C."/>
            <person name="Yu J."/>
            <person name="Archer D.B."/>
            <person name="Bennett J.W."/>
            <person name="Bhatnagar D."/>
            <person name="Cleveland T.E."/>
            <person name="Fedorova N.D."/>
            <person name="Gotoh O."/>
            <person name="Horikawa H."/>
            <person name="Hosoyama A."/>
            <person name="Ichinomiya M."/>
            <person name="Igarashi R."/>
            <person name="Iwashita K."/>
            <person name="Juvvadi P.R."/>
            <person name="Kato M."/>
            <person name="Kato Y."/>
            <person name="Kin T."/>
            <person name="Kokubun A."/>
            <person name="Maeda H."/>
            <person name="Maeyama N."/>
            <person name="Maruyama J."/>
            <person name="Nagasaki H."/>
            <person name="Nakajima T."/>
            <person name="Oda K."/>
            <person name="Okada K."/>
            <person name="Paulsen I."/>
            <person name="Sakamoto K."/>
            <person name="Sawano T."/>
            <person name="Takahashi M."/>
            <person name="Takase K."/>
            <person name="Terabayashi Y."/>
            <person name="Wortman J.R."/>
            <person name="Yamada O."/>
            <person name="Yamagata Y."/>
            <person name="Anazawa H."/>
            <person name="Hata Y."/>
            <person name="Koide Y."/>
            <person name="Komori T."/>
            <person name="Koyama Y."/>
            <person name="Minetoki T."/>
            <person name="Suharnan S."/>
            <person name="Tanaka A."/>
            <person name="Isono K."/>
            <person name="Kuhara S."/>
            <person name="Ogasawara N."/>
            <person name="Kikuchi H."/>
        </authorList>
    </citation>
    <scope>NUCLEOTIDE SEQUENCE [LARGE SCALE GENOMIC DNA]</scope>
    <source>
        <strain>ATCC 42149 / RIB 40</strain>
    </source>
</reference>